<gene>
    <name evidence="1" type="primary">cysD</name>
    <name type="ordered locus">BruAb1_0188</name>
</gene>
<dbReference type="EC" id="2.7.7.4" evidence="1"/>
<dbReference type="EMBL" id="AE017223">
    <property type="protein sequence ID" value="AAX73599.1"/>
    <property type="molecule type" value="Genomic_DNA"/>
</dbReference>
<dbReference type="SMR" id="Q57FI5"/>
<dbReference type="EnsemblBacteria" id="AAX73599">
    <property type="protein sequence ID" value="AAX73599"/>
    <property type="gene ID" value="BruAb1_0188"/>
</dbReference>
<dbReference type="KEGG" id="bmb:BruAb1_0188"/>
<dbReference type="HOGENOM" id="CLU_043026_0_0_5"/>
<dbReference type="UniPathway" id="UPA00140">
    <property type="reaction ID" value="UER00204"/>
</dbReference>
<dbReference type="Proteomes" id="UP000000540">
    <property type="component" value="Chromosome I"/>
</dbReference>
<dbReference type="GO" id="GO:0005524">
    <property type="term" value="F:ATP binding"/>
    <property type="evidence" value="ECO:0007669"/>
    <property type="project" value="UniProtKB-KW"/>
</dbReference>
<dbReference type="GO" id="GO:0004781">
    <property type="term" value="F:sulfate adenylyltransferase (ATP) activity"/>
    <property type="evidence" value="ECO:0007669"/>
    <property type="project" value="UniProtKB-UniRule"/>
</dbReference>
<dbReference type="GO" id="GO:0070814">
    <property type="term" value="P:hydrogen sulfide biosynthetic process"/>
    <property type="evidence" value="ECO:0007669"/>
    <property type="project" value="UniProtKB-UniRule"/>
</dbReference>
<dbReference type="GO" id="GO:0000103">
    <property type="term" value="P:sulfate assimilation"/>
    <property type="evidence" value="ECO:0007669"/>
    <property type="project" value="UniProtKB-UniRule"/>
</dbReference>
<dbReference type="CDD" id="cd23946">
    <property type="entry name" value="Sulfate_adenylyltransferase_2"/>
    <property type="match status" value="1"/>
</dbReference>
<dbReference type="FunFam" id="3.40.50.620:FF:000002">
    <property type="entry name" value="Sulfate adenylyltransferase subunit 2"/>
    <property type="match status" value="1"/>
</dbReference>
<dbReference type="Gene3D" id="3.40.50.620">
    <property type="entry name" value="HUPs"/>
    <property type="match status" value="1"/>
</dbReference>
<dbReference type="HAMAP" id="MF_00064">
    <property type="entry name" value="Sulf_adenylyltr_sub2"/>
    <property type="match status" value="1"/>
</dbReference>
<dbReference type="InterPro" id="IPR002500">
    <property type="entry name" value="PAPS_reduct_dom"/>
</dbReference>
<dbReference type="InterPro" id="IPR014729">
    <property type="entry name" value="Rossmann-like_a/b/a_fold"/>
</dbReference>
<dbReference type="InterPro" id="IPR011784">
    <property type="entry name" value="SO4_adenylTrfase_ssu"/>
</dbReference>
<dbReference type="InterPro" id="IPR050128">
    <property type="entry name" value="Sulfate_adenylyltrnsfr_sub2"/>
</dbReference>
<dbReference type="NCBIfam" id="TIGR02039">
    <property type="entry name" value="CysD"/>
    <property type="match status" value="1"/>
</dbReference>
<dbReference type="NCBIfam" id="NF003587">
    <property type="entry name" value="PRK05253.1"/>
    <property type="match status" value="1"/>
</dbReference>
<dbReference type="NCBIfam" id="NF009214">
    <property type="entry name" value="PRK12563.1"/>
    <property type="match status" value="1"/>
</dbReference>
<dbReference type="PANTHER" id="PTHR43196">
    <property type="entry name" value="SULFATE ADENYLYLTRANSFERASE SUBUNIT 2"/>
    <property type="match status" value="1"/>
</dbReference>
<dbReference type="PANTHER" id="PTHR43196:SF1">
    <property type="entry name" value="SULFATE ADENYLYLTRANSFERASE SUBUNIT 2"/>
    <property type="match status" value="1"/>
</dbReference>
<dbReference type="Pfam" id="PF01507">
    <property type="entry name" value="PAPS_reduct"/>
    <property type="match status" value="1"/>
</dbReference>
<dbReference type="PIRSF" id="PIRSF002936">
    <property type="entry name" value="CysDAde_trans"/>
    <property type="match status" value="1"/>
</dbReference>
<dbReference type="SUPFAM" id="SSF52402">
    <property type="entry name" value="Adenine nucleotide alpha hydrolases-like"/>
    <property type="match status" value="1"/>
</dbReference>
<keyword id="KW-0067">ATP-binding</keyword>
<keyword id="KW-0547">Nucleotide-binding</keyword>
<keyword id="KW-0548">Nucleotidyltransferase</keyword>
<keyword id="KW-0808">Transferase</keyword>
<organism>
    <name type="scientific">Brucella abortus biovar 1 (strain 9-941)</name>
    <dbReference type="NCBI Taxonomy" id="262698"/>
    <lineage>
        <taxon>Bacteria</taxon>
        <taxon>Pseudomonadati</taxon>
        <taxon>Pseudomonadota</taxon>
        <taxon>Alphaproteobacteria</taxon>
        <taxon>Hyphomicrobiales</taxon>
        <taxon>Brucellaceae</taxon>
        <taxon>Brucella/Ochrobactrum group</taxon>
        <taxon>Brucella</taxon>
    </lineage>
</organism>
<sequence>MKNLTHLQRLEAEAIYVFREVAATFSNPVMLYSVGKDSSVMLHLAMKAFYPAPPPFPFLHVDTTWKFREMIEFRDAQAREKGFELLVHVNEQGVRDGIGPFTHGSNVHTHIMKTVGLRQALDKYRFDAAFGGARRDEEKSRAKERIFSFRNAQHGWDPKNQRPEMWKIYNTRVSKGESIRVFPLSNWTELDIWQYILQENIPIVPLYFAARRPVVERDGMLIMVDDDRMKLRPGEPVENRLVRFRTLGCYPLTGAIPSSAANLSDIVEEMLIARTSERQGRAIDRDEAGSMEKKKREGYF</sequence>
<accession>Q57FI5</accession>
<proteinExistence type="inferred from homology"/>
<comment type="function">
    <text evidence="1">With CysN forms the ATP sulfurylase (ATPS) that catalyzes the adenylation of sulfate producing adenosine 5'-phosphosulfate (APS) and diphosphate, the first enzymatic step in sulfur assimilation pathway. APS synthesis involves the formation of a high-energy phosphoric-sulfuric acid anhydride bond driven by GTP hydrolysis by CysN coupled to ATP hydrolysis by CysD.</text>
</comment>
<comment type="catalytic activity">
    <reaction evidence="1">
        <text>sulfate + ATP + H(+) = adenosine 5'-phosphosulfate + diphosphate</text>
        <dbReference type="Rhea" id="RHEA:18133"/>
        <dbReference type="ChEBI" id="CHEBI:15378"/>
        <dbReference type="ChEBI" id="CHEBI:16189"/>
        <dbReference type="ChEBI" id="CHEBI:30616"/>
        <dbReference type="ChEBI" id="CHEBI:33019"/>
        <dbReference type="ChEBI" id="CHEBI:58243"/>
        <dbReference type="EC" id="2.7.7.4"/>
    </reaction>
</comment>
<comment type="pathway">
    <text evidence="1">Sulfur metabolism; hydrogen sulfide biosynthesis; sulfite from sulfate: step 1/3.</text>
</comment>
<comment type="subunit">
    <text evidence="1">Heterodimer composed of CysD, the smaller subunit, and CysN.</text>
</comment>
<comment type="similarity">
    <text evidence="1">Belongs to the PAPS reductase family. CysD subfamily.</text>
</comment>
<protein>
    <recommendedName>
        <fullName evidence="1">Sulfate adenylyltransferase subunit 2</fullName>
        <ecNumber evidence="1">2.7.7.4</ecNumber>
    </recommendedName>
    <alternativeName>
        <fullName evidence="1">ATP-sulfurylase small subunit</fullName>
    </alternativeName>
    <alternativeName>
        <fullName evidence="1">Sulfate adenylate transferase</fullName>
        <shortName evidence="1">SAT</shortName>
    </alternativeName>
</protein>
<feature type="chain" id="PRO_0000340182" description="Sulfate adenylyltransferase subunit 2">
    <location>
        <begin position="1"/>
        <end position="300"/>
    </location>
</feature>
<feature type="region of interest" description="Disordered" evidence="2">
    <location>
        <begin position="281"/>
        <end position="300"/>
    </location>
</feature>
<evidence type="ECO:0000255" key="1">
    <source>
        <dbReference type="HAMAP-Rule" id="MF_00064"/>
    </source>
</evidence>
<evidence type="ECO:0000256" key="2">
    <source>
        <dbReference type="SAM" id="MobiDB-lite"/>
    </source>
</evidence>
<reference key="1">
    <citation type="journal article" date="2005" name="J. Bacteriol.">
        <title>Completion of the genome sequence of Brucella abortus and comparison to the highly similar genomes of Brucella melitensis and Brucella suis.</title>
        <authorList>
            <person name="Halling S.M."/>
            <person name="Peterson-Burch B.D."/>
            <person name="Bricker B.J."/>
            <person name="Zuerner R.L."/>
            <person name="Qing Z."/>
            <person name="Li L.-L."/>
            <person name="Kapur V."/>
            <person name="Alt D.P."/>
            <person name="Olsen S.C."/>
        </authorList>
    </citation>
    <scope>NUCLEOTIDE SEQUENCE [LARGE SCALE GENOMIC DNA]</scope>
    <source>
        <strain>9-941</strain>
    </source>
</reference>
<name>CYSD_BRUAB</name>